<gene>
    <name evidence="1" type="primary">rph</name>
    <name type="ordered locus">BCQ_4286</name>
</gene>
<accession>B9IZ73</accession>
<feature type="chain" id="PRO_1000194467" description="Ribonuclease PH">
    <location>
        <begin position="1"/>
        <end position="245"/>
    </location>
</feature>
<feature type="binding site" evidence="1">
    <location>
        <position position="86"/>
    </location>
    <ligand>
        <name>phosphate</name>
        <dbReference type="ChEBI" id="CHEBI:43474"/>
        <note>substrate</note>
    </ligand>
</feature>
<feature type="binding site" evidence="1">
    <location>
        <begin position="124"/>
        <end position="126"/>
    </location>
    <ligand>
        <name>phosphate</name>
        <dbReference type="ChEBI" id="CHEBI:43474"/>
        <note>substrate</note>
    </ligand>
</feature>
<dbReference type="EC" id="2.7.7.56" evidence="1"/>
<dbReference type="EMBL" id="CP000227">
    <property type="protein sequence ID" value="ACM14712.1"/>
    <property type="molecule type" value="Genomic_DNA"/>
</dbReference>
<dbReference type="SMR" id="B9IZ73"/>
<dbReference type="KEGG" id="bcq:BCQ_4286"/>
<dbReference type="HOGENOM" id="CLU_050858_0_0_9"/>
<dbReference type="Proteomes" id="UP000000441">
    <property type="component" value="Chromosome"/>
</dbReference>
<dbReference type="GO" id="GO:0000175">
    <property type="term" value="F:3'-5'-RNA exonuclease activity"/>
    <property type="evidence" value="ECO:0007669"/>
    <property type="project" value="UniProtKB-UniRule"/>
</dbReference>
<dbReference type="GO" id="GO:0000049">
    <property type="term" value="F:tRNA binding"/>
    <property type="evidence" value="ECO:0007669"/>
    <property type="project" value="UniProtKB-UniRule"/>
</dbReference>
<dbReference type="GO" id="GO:0009022">
    <property type="term" value="F:tRNA nucleotidyltransferase activity"/>
    <property type="evidence" value="ECO:0007669"/>
    <property type="project" value="UniProtKB-UniRule"/>
</dbReference>
<dbReference type="GO" id="GO:0016075">
    <property type="term" value="P:rRNA catabolic process"/>
    <property type="evidence" value="ECO:0007669"/>
    <property type="project" value="UniProtKB-UniRule"/>
</dbReference>
<dbReference type="GO" id="GO:0006364">
    <property type="term" value="P:rRNA processing"/>
    <property type="evidence" value="ECO:0007669"/>
    <property type="project" value="UniProtKB-KW"/>
</dbReference>
<dbReference type="GO" id="GO:0008033">
    <property type="term" value="P:tRNA processing"/>
    <property type="evidence" value="ECO:0007669"/>
    <property type="project" value="UniProtKB-UniRule"/>
</dbReference>
<dbReference type="CDD" id="cd11362">
    <property type="entry name" value="RNase_PH_bact"/>
    <property type="match status" value="1"/>
</dbReference>
<dbReference type="FunFam" id="3.30.230.70:FF:000003">
    <property type="entry name" value="Ribonuclease PH"/>
    <property type="match status" value="1"/>
</dbReference>
<dbReference type="Gene3D" id="3.30.230.70">
    <property type="entry name" value="GHMP Kinase, N-terminal domain"/>
    <property type="match status" value="1"/>
</dbReference>
<dbReference type="HAMAP" id="MF_00564">
    <property type="entry name" value="RNase_PH"/>
    <property type="match status" value="1"/>
</dbReference>
<dbReference type="InterPro" id="IPR001247">
    <property type="entry name" value="ExoRNase_PH_dom1"/>
</dbReference>
<dbReference type="InterPro" id="IPR015847">
    <property type="entry name" value="ExoRNase_PH_dom2"/>
</dbReference>
<dbReference type="InterPro" id="IPR036345">
    <property type="entry name" value="ExoRNase_PH_dom2_sf"/>
</dbReference>
<dbReference type="InterPro" id="IPR027408">
    <property type="entry name" value="PNPase/RNase_PH_dom_sf"/>
</dbReference>
<dbReference type="InterPro" id="IPR020568">
    <property type="entry name" value="Ribosomal_Su5_D2-typ_SF"/>
</dbReference>
<dbReference type="InterPro" id="IPR050080">
    <property type="entry name" value="RNase_PH"/>
</dbReference>
<dbReference type="InterPro" id="IPR002381">
    <property type="entry name" value="RNase_PH_bac-type"/>
</dbReference>
<dbReference type="InterPro" id="IPR018336">
    <property type="entry name" value="RNase_PH_CS"/>
</dbReference>
<dbReference type="NCBIfam" id="TIGR01966">
    <property type="entry name" value="RNasePH"/>
    <property type="match status" value="1"/>
</dbReference>
<dbReference type="PANTHER" id="PTHR11953">
    <property type="entry name" value="EXOSOME COMPLEX COMPONENT"/>
    <property type="match status" value="1"/>
</dbReference>
<dbReference type="PANTHER" id="PTHR11953:SF0">
    <property type="entry name" value="EXOSOME COMPLEX COMPONENT RRP41"/>
    <property type="match status" value="1"/>
</dbReference>
<dbReference type="Pfam" id="PF01138">
    <property type="entry name" value="RNase_PH"/>
    <property type="match status" value="1"/>
</dbReference>
<dbReference type="Pfam" id="PF03725">
    <property type="entry name" value="RNase_PH_C"/>
    <property type="match status" value="1"/>
</dbReference>
<dbReference type="SUPFAM" id="SSF55666">
    <property type="entry name" value="Ribonuclease PH domain 2-like"/>
    <property type="match status" value="1"/>
</dbReference>
<dbReference type="SUPFAM" id="SSF54211">
    <property type="entry name" value="Ribosomal protein S5 domain 2-like"/>
    <property type="match status" value="1"/>
</dbReference>
<dbReference type="PROSITE" id="PS01277">
    <property type="entry name" value="RIBONUCLEASE_PH"/>
    <property type="match status" value="1"/>
</dbReference>
<evidence type="ECO:0000255" key="1">
    <source>
        <dbReference type="HAMAP-Rule" id="MF_00564"/>
    </source>
</evidence>
<reference key="1">
    <citation type="journal article" date="2009" name="J. Bacteriol.">
        <title>Complete genome sequence of the extremophilic Bacillus cereus strain Q1 with industrial applications.</title>
        <authorList>
            <person name="Xiong Z."/>
            <person name="Jiang Y."/>
            <person name="Qi D."/>
            <person name="Lu H."/>
            <person name="Yang F."/>
            <person name="Yang J."/>
            <person name="Chen L."/>
            <person name="Sun L."/>
            <person name="Xu X."/>
            <person name="Xue Y."/>
            <person name="Zhu Y."/>
            <person name="Jin Q."/>
        </authorList>
    </citation>
    <scope>NUCLEOTIDE SEQUENCE [LARGE SCALE GENOMIC DNA]</scope>
    <source>
        <strain>Q1</strain>
    </source>
</reference>
<sequence length="245" mass="27001">MRVDGREKTELRHIHIHTNYLKHPEGSVLIEVGDTKVICSATIEERVPPFMRGEGKGWVTAEYAMIPRATEQRTIRESSKGKVTGRTMEIQRLIGRALRAVVDLEALGERTVWIDCDVIQADGGTRTASITGAYVAMVLAFEKLLQAEKVSKIPVKDYLAATSVGIVEEQGVVLDLNYAEDSKADVDMNVIMTGKGQFVEVQGTGEEATFSRAQLNELLDAAEQGIFQLIDMQKEALGDIVSHIE</sequence>
<keyword id="KW-0548">Nucleotidyltransferase</keyword>
<keyword id="KW-0694">RNA-binding</keyword>
<keyword id="KW-0698">rRNA processing</keyword>
<keyword id="KW-0808">Transferase</keyword>
<keyword id="KW-0819">tRNA processing</keyword>
<keyword id="KW-0820">tRNA-binding</keyword>
<organism>
    <name type="scientific">Bacillus cereus (strain Q1)</name>
    <dbReference type="NCBI Taxonomy" id="361100"/>
    <lineage>
        <taxon>Bacteria</taxon>
        <taxon>Bacillati</taxon>
        <taxon>Bacillota</taxon>
        <taxon>Bacilli</taxon>
        <taxon>Bacillales</taxon>
        <taxon>Bacillaceae</taxon>
        <taxon>Bacillus</taxon>
        <taxon>Bacillus cereus group</taxon>
    </lineage>
</organism>
<proteinExistence type="inferred from homology"/>
<protein>
    <recommendedName>
        <fullName evidence="1">Ribonuclease PH</fullName>
        <shortName evidence="1">RNase PH</shortName>
        <ecNumber evidence="1">2.7.7.56</ecNumber>
    </recommendedName>
    <alternativeName>
        <fullName evidence="1">tRNA nucleotidyltransferase</fullName>
    </alternativeName>
</protein>
<comment type="function">
    <text evidence="1">Phosphorolytic 3'-5' exoribonuclease that plays an important role in tRNA 3'-end maturation. Removes nucleotide residues following the 3'-CCA terminus of tRNAs; can also add nucleotides to the ends of RNA molecules by using nucleoside diphosphates as substrates, but this may not be physiologically important. Probably plays a role in initiation of 16S rRNA degradation (leading to ribosome degradation) during starvation.</text>
</comment>
<comment type="catalytic activity">
    <reaction evidence="1">
        <text>tRNA(n+1) + phosphate = tRNA(n) + a ribonucleoside 5'-diphosphate</text>
        <dbReference type="Rhea" id="RHEA:10628"/>
        <dbReference type="Rhea" id="RHEA-COMP:17343"/>
        <dbReference type="Rhea" id="RHEA-COMP:17344"/>
        <dbReference type="ChEBI" id="CHEBI:43474"/>
        <dbReference type="ChEBI" id="CHEBI:57930"/>
        <dbReference type="ChEBI" id="CHEBI:173114"/>
        <dbReference type="EC" id="2.7.7.56"/>
    </reaction>
</comment>
<comment type="subunit">
    <text evidence="1">Homohexameric ring arranged as a trimer of dimers.</text>
</comment>
<comment type="similarity">
    <text evidence="1">Belongs to the RNase PH family.</text>
</comment>
<name>RNPH_BACCQ</name>